<gene>
    <name type="primary">dymB</name>
    <name type="ORF">DDB_G0277851</name>
</gene>
<sequence length="920" mass="105254">MLSSTAILKASGDVAINYQQYIYPIIINKLSTLNYTIKNKKYYSQYKYSIQFQNEFQKNLKIYNNSNNNNNNNNNNKINKNNNNNNNNISKFFIQNNNIDKKVLRHFYSSTKLNYAKQQQQLFKNNETFNETVGASLLPIINKLQENAALIGSEITLPQIIVVGSQSSGKSSVLENLVGRDFLPRGSGLVTRRPLVLQLYQTTTTSRNNVNENEDEDEDDNYYDNDNDDNSLEEWGEFGHTGTNRFNFQEIKEEIERETERIAGPNKDISSEPIVLKIYSPKVVPLTLVDLPGLTRVAIEDQPPDIEEKIKSMIIDYISNPNSIILAITPANQDIVTSDALKLAQQVDPLGKRTIGVLTKLDLMDKGTDAIDILLGNSIPLSLGFVGVVNRSQQDINNRKPIEQMLADEWKWFDQHPVYHRITNQLGTKYLAQKCNKILTKHIRDTFPSVKNQIRQLIKKYESDLEKYGEPIPLRSAEKSRLLLDILNEFSRKYRADLDGTNEELILNEFNGGARIRYIFSKAFQSTTAAAATTSTDNSGGGEPFGWLSDQQLKIALRNSGSTMFIPQKIFDSLIRKQLERVREPLIQTSEIILDELIRILTQADYSHVLSRFPILKERIVEVSNNALRKLVKECNQSISQMVDAEMSFINTNHPNYLYQLNNLLFSSSSSSFVVPQGAFQSTSSTSSSPTSSSSSLPLPQNSNPYNDALNPYNIDRSYPIDNQIKQQQQQQQQQQQQSYQQQQQQQQKQQSGFLSRIFGSSSSPPSPPSPPQPKQQQSHEIQIQQQQQQQQQQHLKKQNLIFDDKFKLEQYGLNDITEDEKKQIYLLRRLLLAYNDIAQFNLQQNTMKLVSLLLIDKSKDILQKELIDSLYDQSSVDQLLRENELVVAKRNECIYKLDLLKKAKKSLSQSENSDLLHLY</sequence>
<name>DYNB_DICDI</name>
<feature type="chain" id="PRO_0000384412" description="Dynamin-B">
    <location>
        <begin position="1"/>
        <end position="920"/>
    </location>
</feature>
<feature type="domain" description="Dynamin-type G" evidence="4">
    <location>
        <begin position="154"/>
        <end position="448"/>
    </location>
</feature>
<feature type="domain" description="GED" evidence="3">
    <location>
        <begin position="825"/>
        <end position="916"/>
    </location>
</feature>
<feature type="region of interest" description="Disordered" evidence="5">
    <location>
        <begin position="65"/>
        <end position="84"/>
    </location>
</feature>
<feature type="region of interest" description="G1 motif" evidence="4">
    <location>
        <begin position="164"/>
        <end position="171"/>
    </location>
</feature>
<feature type="region of interest" description="G2 motif" evidence="4">
    <location>
        <begin position="190"/>
        <end position="192"/>
    </location>
</feature>
<feature type="region of interest" description="Disordered" evidence="5">
    <location>
        <begin position="204"/>
        <end position="241"/>
    </location>
</feature>
<feature type="region of interest" description="G3 motif" evidence="4">
    <location>
        <begin position="290"/>
        <end position="293"/>
    </location>
</feature>
<feature type="region of interest" description="G4 motif" evidence="4">
    <location>
        <begin position="359"/>
        <end position="362"/>
    </location>
</feature>
<feature type="region of interest" description="G5 motif" evidence="4">
    <location>
        <begin position="389"/>
        <end position="392"/>
    </location>
</feature>
<feature type="region of interest" description="Disordered" evidence="5">
    <location>
        <begin position="680"/>
        <end position="790"/>
    </location>
</feature>
<feature type="coiled-coil region" evidence="2">
    <location>
        <begin position="724"/>
        <end position="751"/>
    </location>
</feature>
<feature type="compositionally biased region" description="Acidic residues" evidence="5">
    <location>
        <begin position="212"/>
        <end position="236"/>
    </location>
</feature>
<feature type="compositionally biased region" description="Low complexity" evidence="5">
    <location>
        <begin position="681"/>
        <end position="705"/>
    </location>
</feature>
<feature type="compositionally biased region" description="Low complexity" evidence="5">
    <location>
        <begin position="724"/>
        <end position="751"/>
    </location>
</feature>
<feature type="compositionally biased region" description="Pro residues" evidence="5">
    <location>
        <begin position="765"/>
        <end position="774"/>
    </location>
</feature>
<feature type="compositionally biased region" description="Low complexity" evidence="5">
    <location>
        <begin position="775"/>
        <end position="790"/>
    </location>
</feature>
<feature type="binding site" evidence="1">
    <location>
        <begin position="164"/>
        <end position="172"/>
    </location>
    <ligand>
        <name>GTP</name>
        <dbReference type="ChEBI" id="CHEBI:37565"/>
    </ligand>
</feature>
<feature type="binding site" evidence="1">
    <location>
        <begin position="359"/>
        <end position="365"/>
    </location>
    <ligand>
        <name>GTP</name>
        <dbReference type="ChEBI" id="CHEBI:37565"/>
    </ligand>
</feature>
<feature type="binding site" evidence="1">
    <location>
        <begin position="390"/>
        <end position="393"/>
    </location>
    <ligand>
        <name>GTP</name>
        <dbReference type="ChEBI" id="CHEBI:37565"/>
    </ligand>
</feature>
<accession>Q9U1M9</accession>
<accession>Q54XV5</accession>
<evidence type="ECO:0000250" key="1">
    <source>
        <dbReference type="UniProtKB" id="O00429"/>
    </source>
</evidence>
<evidence type="ECO:0000255" key="2"/>
<evidence type="ECO:0000255" key="3">
    <source>
        <dbReference type="PROSITE-ProRule" id="PRU00720"/>
    </source>
</evidence>
<evidence type="ECO:0000255" key="4">
    <source>
        <dbReference type="PROSITE-ProRule" id="PRU01055"/>
    </source>
</evidence>
<evidence type="ECO:0000256" key="5">
    <source>
        <dbReference type="SAM" id="MobiDB-lite"/>
    </source>
</evidence>
<evidence type="ECO:0000305" key="6"/>
<dbReference type="EMBL" id="AJ251163">
    <property type="protein sequence ID" value="CAB64379.1"/>
    <property type="molecule type" value="Genomic_DNA"/>
</dbReference>
<dbReference type="EMBL" id="AAFI02000023">
    <property type="protein sequence ID" value="EAL68098.1"/>
    <property type="molecule type" value="Genomic_DNA"/>
</dbReference>
<dbReference type="RefSeq" id="XP_642447.1">
    <property type="nucleotide sequence ID" value="XM_637355.1"/>
</dbReference>
<dbReference type="SMR" id="Q9U1M9"/>
<dbReference type="STRING" id="44689.Q9U1M9"/>
<dbReference type="PaxDb" id="44689-DDB0215390"/>
<dbReference type="EnsemblProtists" id="EAL68098">
    <property type="protein sequence ID" value="EAL68098"/>
    <property type="gene ID" value="DDB_G0277851"/>
</dbReference>
<dbReference type="GeneID" id="8621653"/>
<dbReference type="KEGG" id="ddi:DDB_G0277851"/>
<dbReference type="dictyBase" id="DDB_G0277851">
    <property type="gene designation" value="dymB"/>
</dbReference>
<dbReference type="VEuPathDB" id="AmoebaDB:DDB_G0277851"/>
<dbReference type="eggNOG" id="KOG0446">
    <property type="taxonomic scope" value="Eukaryota"/>
</dbReference>
<dbReference type="HOGENOM" id="CLU_008964_5_0_1"/>
<dbReference type="InParanoid" id="Q9U1M9"/>
<dbReference type="OMA" id="AQKCNKI"/>
<dbReference type="PhylomeDB" id="Q9U1M9"/>
<dbReference type="Reactome" id="R-DDI-1169408">
    <property type="pathway name" value="ISG15 antiviral mechanism"/>
</dbReference>
<dbReference type="Reactome" id="R-DDI-169911">
    <property type="pathway name" value="Regulation of Apoptosis"/>
</dbReference>
<dbReference type="PRO" id="PR:Q9U1M9"/>
<dbReference type="Proteomes" id="UP000002195">
    <property type="component" value="Chromosome 3"/>
</dbReference>
<dbReference type="GO" id="GO:0031252">
    <property type="term" value="C:cell leading edge"/>
    <property type="evidence" value="ECO:0000314"/>
    <property type="project" value="dictyBase"/>
</dbReference>
<dbReference type="GO" id="GO:0000331">
    <property type="term" value="C:contractile vacuole"/>
    <property type="evidence" value="ECO:0000314"/>
    <property type="project" value="dictyBase"/>
</dbReference>
<dbReference type="GO" id="GO:0005737">
    <property type="term" value="C:cytoplasm"/>
    <property type="evidence" value="ECO:0000314"/>
    <property type="project" value="dictyBase"/>
</dbReference>
<dbReference type="GO" id="GO:0016020">
    <property type="term" value="C:membrane"/>
    <property type="evidence" value="ECO:0000318"/>
    <property type="project" value="GO_Central"/>
</dbReference>
<dbReference type="GO" id="GO:0005874">
    <property type="term" value="C:microtubule"/>
    <property type="evidence" value="ECO:0000318"/>
    <property type="project" value="GO_Central"/>
</dbReference>
<dbReference type="GO" id="GO:0005741">
    <property type="term" value="C:mitochondrial outer membrane"/>
    <property type="evidence" value="ECO:0000314"/>
    <property type="project" value="dictyBase"/>
</dbReference>
<dbReference type="GO" id="GO:0045335">
    <property type="term" value="C:phagocytic vesicle"/>
    <property type="evidence" value="ECO:0000314"/>
    <property type="project" value="dictyBase"/>
</dbReference>
<dbReference type="GO" id="GO:0005886">
    <property type="term" value="C:plasma membrane"/>
    <property type="evidence" value="ECO:0000314"/>
    <property type="project" value="dictyBase"/>
</dbReference>
<dbReference type="GO" id="GO:0031143">
    <property type="term" value="C:pseudopodium"/>
    <property type="evidence" value="ECO:0000314"/>
    <property type="project" value="dictyBase"/>
</dbReference>
<dbReference type="GO" id="GO:0005525">
    <property type="term" value="F:GTP binding"/>
    <property type="evidence" value="ECO:0007669"/>
    <property type="project" value="UniProtKB-KW"/>
</dbReference>
<dbReference type="GO" id="GO:0003924">
    <property type="term" value="F:GTPase activity"/>
    <property type="evidence" value="ECO:0000318"/>
    <property type="project" value="GO_Central"/>
</dbReference>
<dbReference type="GO" id="GO:0008017">
    <property type="term" value="F:microtubule binding"/>
    <property type="evidence" value="ECO:0000318"/>
    <property type="project" value="GO_Central"/>
</dbReference>
<dbReference type="GO" id="GO:0098609">
    <property type="term" value="P:cell-cell adhesion"/>
    <property type="evidence" value="ECO:0000315"/>
    <property type="project" value="dictyBase"/>
</dbReference>
<dbReference type="GO" id="GO:0031589">
    <property type="term" value="P:cell-substrate adhesion"/>
    <property type="evidence" value="ECO:0000315"/>
    <property type="project" value="dictyBase"/>
</dbReference>
<dbReference type="GO" id="GO:0071476">
    <property type="term" value="P:cellular hypotonic response"/>
    <property type="evidence" value="ECO:0000315"/>
    <property type="project" value="dictyBase"/>
</dbReference>
<dbReference type="GO" id="GO:0048312">
    <property type="term" value="P:intracellular distribution of mitochondria"/>
    <property type="evidence" value="ECO:0000318"/>
    <property type="project" value="GO_Central"/>
</dbReference>
<dbReference type="GO" id="GO:0000266">
    <property type="term" value="P:mitochondrial fission"/>
    <property type="evidence" value="ECO:0000318"/>
    <property type="project" value="GO_Central"/>
</dbReference>
<dbReference type="GO" id="GO:0016559">
    <property type="term" value="P:peroxisome fission"/>
    <property type="evidence" value="ECO:0000318"/>
    <property type="project" value="GO_Central"/>
</dbReference>
<dbReference type="GO" id="GO:0060151">
    <property type="term" value="P:peroxisome localization"/>
    <property type="evidence" value="ECO:0000315"/>
    <property type="project" value="dictyBase"/>
</dbReference>
<dbReference type="GO" id="GO:0006909">
    <property type="term" value="P:phagocytosis"/>
    <property type="evidence" value="ECO:0000315"/>
    <property type="project" value="dictyBase"/>
</dbReference>
<dbReference type="GO" id="GO:0009617">
    <property type="term" value="P:response to bacterium"/>
    <property type="evidence" value="ECO:0007007"/>
    <property type="project" value="dictyBase"/>
</dbReference>
<dbReference type="CDD" id="cd08771">
    <property type="entry name" value="DLP_1"/>
    <property type="match status" value="1"/>
</dbReference>
<dbReference type="FunFam" id="3.40.50.300:FF:001853">
    <property type="entry name" value="Dynamin family protein"/>
    <property type="match status" value="1"/>
</dbReference>
<dbReference type="Gene3D" id="1.20.120.1240">
    <property type="entry name" value="Dynamin, middle domain"/>
    <property type="match status" value="1"/>
</dbReference>
<dbReference type="Gene3D" id="3.40.50.300">
    <property type="entry name" value="P-loop containing nucleotide triphosphate hydrolases"/>
    <property type="match status" value="1"/>
</dbReference>
<dbReference type="InterPro" id="IPR022812">
    <property type="entry name" value="Dynamin"/>
</dbReference>
<dbReference type="InterPro" id="IPR001401">
    <property type="entry name" value="Dynamin_GTPase"/>
</dbReference>
<dbReference type="InterPro" id="IPR019762">
    <property type="entry name" value="Dynamin_GTPase_CS"/>
</dbReference>
<dbReference type="InterPro" id="IPR045063">
    <property type="entry name" value="Dynamin_N"/>
</dbReference>
<dbReference type="InterPro" id="IPR000375">
    <property type="entry name" value="Dynamin_stalk"/>
</dbReference>
<dbReference type="InterPro" id="IPR030381">
    <property type="entry name" value="G_DYNAMIN_dom"/>
</dbReference>
<dbReference type="InterPro" id="IPR003130">
    <property type="entry name" value="GED"/>
</dbReference>
<dbReference type="InterPro" id="IPR020850">
    <property type="entry name" value="GED_dom"/>
</dbReference>
<dbReference type="InterPro" id="IPR027417">
    <property type="entry name" value="P-loop_NTPase"/>
</dbReference>
<dbReference type="PANTHER" id="PTHR11566">
    <property type="entry name" value="DYNAMIN"/>
    <property type="match status" value="1"/>
</dbReference>
<dbReference type="PANTHER" id="PTHR11566:SF56">
    <property type="entry name" value="DYNAMIN-B"/>
    <property type="match status" value="1"/>
</dbReference>
<dbReference type="Pfam" id="PF01031">
    <property type="entry name" value="Dynamin_M"/>
    <property type="match status" value="1"/>
</dbReference>
<dbReference type="Pfam" id="PF00350">
    <property type="entry name" value="Dynamin_N"/>
    <property type="match status" value="1"/>
</dbReference>
<dbReference type="Pfam" id="PF02212">
    <property type="entry name" value="GED"/>
    <property type="match status" value="1"/>
</dbReference>
<dbReference type="PRINTS" id="PR00195">
    <property type="entry name" value="DYNAMIN"/>
</dbReference>
<dbReference type="SMART" id="SM00053">
    <property type="entry name" value="DYNc"/>
    <property type="match status" value="1"/>
</dbReference>
<dbReference type="SMART" id="SM00302">
    <property type="entry name" value="GED"/>
    <property type="match status" value="1"/>
</dbReference>
<dbReference type="SUPFAM" id="SSF52540">
    <property type="entry name" value="P-loop containing nucleoside triphosphate hydrolases"/>
    <property type="match status" value="1"/>
</dbReference>
<dbReference type="PROSITE" id="PS00410">
    <property type="entry name" value="G_DYNAMIN_1"/>
    <property type="match status" value="1"/>
</dbReference>
<dbReference type="PROSITE" id="PS51718">
    <property type="entry name" value="G_DYNAMIN_2"/>
    <property type="match status" value="1"/>
</dbReference>
<dbReference type="PROSITE" id="PS51388">
    <property type="entry name" value="GED"/>
    <property type="match status" value="1"/>
</dbReference>
<proteinExistence type="inferred from homology"/>
<keyword id="KW-0175">Coiled coil</keyword>
<keyword id="KW-0963">Cytoplasm</keyword>
<keyword id="KW-0342">GTP-binding</keyword>
<keyword id="KW-0378">Hydrolase</keyword>
<keyword id="KW-0547">Nucleotide-binding</keyword>
<keyword id="KW-1185">Reference proteome</keyword>
<comment type="function">
    <text evidence="6">Enzyme hydrolyzing GTP.</text>
</comment>
<comment type="subcellular location">
    <subcellularLocation>
        <location evidence="6">Cytoplasm</location>
    </subcellularLocation>
</comment>
<comment type="similarity">
    <text evidence="4">Belongs to the TRAFAC class dynamin-like GTPase superfamily. Dynamin/Fzo/YdjA family.</text>
</comment>
<organism>
    <name type="scientific">Dictyostelium discoideum</name>
    <name type="common">Social amoeba</name>
    <dbReference type="NCBI Taxonomy" id="44689"/>
    <lineage>
        <taxon>Eukaryota</taxon>
        <taxon>Amoebozoa</taxon>
        <taxon>Evosea</taxon>
        <taxon>Eumycetozoa</taxon>
        <taxon>Dictyostelia</taxon>
        <taxon>Dictyosteliales</taxon>
        <taxon>Dictyosteliaceae</taxon>
        <taxon>Dictyostelium</taxon>
    </lineage>
</organism>
<reference key="1">
    <citation type="book" date="1999" name="Abstracts of the 39th Annual Meeting of American Society of Cell Biology">
        <title>Functional characterization of Dictyostelium dynamin B.</title>
        <authorList>
            <person name="Noethe H.B."/>
            <person name="Manstein D.J."/>
        </authorList>
    </citation>
    <scope>NUCLEOTIDE SEQUENCE [GENOMIC DNA]</scope>
    <source>
        <strain>AX2</strain>
    </source>
</reference>
<reference key="2">
    <citation type="journal article" date="2005" name="Nature">
        <title>The genome of the social amoeba Dictyostelium discoideum.</title>
        <authorList>
            <person name="Eichinger L."/>
            <person name="Pachebat J.A."/>
            <person name="Gloeckner G."/>
            <person name="Rajandream M.A."/>
            <person name="Sucgang R."/>
            <person name="Berriman M."/>
            <person name="Song J."/>
            <person name="Olsen R."/>
            <person name="Szafranski K."/>
            <person name="Xu Q."/>
            <person name="Tunggal B."/>
            <person name="Kummerfeld S."/>
            <person name="Madera M."/>
            <person name="Konfortov B.A."/>
            <person name="Rivero F."/>
            <person name="Bankier A.T."/>
            <person name="Lehmann R."/>
            <person name="Hamlin N."/>
            <person name="Davies R."/>
            <person name="Gaudet P."/>
            <person name="Fey P."/>
            <person name="Pilcher K."/>
            <person name="Chen G."/>
            <person name="Saunders D."/>
            <person name="Sodergren E.J."/>
            <person name="Davis P."/>
            <person name="Kerhornou A."/>
            <person name="Nie X."/>
            <person name="Hall N."/>
            <person name="Anjard C."/>
            <person name="Hemphill L."/>
            <person name="Bason N."/>
            <person name="Farbrother P."/>
            <person name="Desany B."/>
            <person name="Just E."/>
            <person name="Morio T."/>
            <person name="Rost R."/>
            <person name="Churcher C.M."/>
            <person name="Cooper J."/>
            <person name="Haydock S."/>
            <person name="van Driessche N."/>
            <person name="Cronin A."/>
            <person name="Goodhead I."/>
            <person name="Muzny D.M."/>
            <person name="Mourier T."/>
            <person name="Pain A."/>
            <person name="Lu M."/>
            <person name="Harper D."/>
            <person name="Lindsay R."/>
            <person name="Hauser H."/>
            <person name="James K.D."/>
            <person name="Quiles M."/>
            <person name="Madan Babu M."/>
            <person name="Saito T."/>
            <person name="Buchrieser C."/>
            <person name="Wardroper A."/>
            <person name="Felder M."/>
            <person name="Thangavelu M."/>
            <person name="Johnson D."/>
            <person name="Knights A."/>
            <person name="Loulseged H."/>
            <person name="Mungall K.L."/>
            <person name="Oliver K."/>
            <person name="Price C."/>
            <person name="Quail M.A."/>
            <person name="Urushihara H."/>
            <person name="Hernandez J."/>
            <person name="Rabbinowitsch E."/>
            <person name="Steffen D."/>
            <person name="Sanders M."/>
            <person name="Ma J."/>
            <person name="Kohara Y."/>
            <person name="Sharp S."/>
            <person name="Simmonds M.N."/>
            <person name="Spiegler S."/>
            <person name="Tivey A."/>
            <person name="Sugano S."/>
            <person name="White B."/>
            <person name="Walker D."/>
            <person name="Woodward J.R."/>
            <person name="Winckler T."/>
            <person name="Tanaka Y."/>
            <person name="Shaulsky G."/>
            <person name="Schleicher M."/>
            <person name="Weinstock G.M."/>
            <person name="Rosenthal A."/>
            <person name="Cox E.C."/>
            <person name="Chisholm R.L."/>
            <person name="Gibbs R.A."/>
            <person name="Loomis W.F."/>
            <person name="Platzer M."/>
            <person name="Kay R.R."/>
            <person name="Williams J.G."/>
            <person name="Dear P.H."/>
            <person name="Noegel A.A."/>
            <person name="Barrell B.G."/>
            <person name="Kuspa A."/>
        </authorList>
    </citation>
    <scope>NUCLEOTIDE SEQUENCE [LARGE SCALE GENOMIC DNA]</scope>
    <source>
        <strain>AX4</strain>
    </source>
</reference>
<protein>
    <recommendedName>
        <fullName>Dynamin-B</fullName>
    </recommendedName>
</protein>